<name>MOAA_PICP2</name>
<evidence type="ECO:0000255" key="1">
    <source>
        <dbReference type="HAMAP-Rule" id="MF_01225"/>
    </source>
</evidence>
<evidence type="ECO:0000255" key="2">
    <source>
        <dbReference type="PROSITE-ProRule" id="PRU01266"/>
    </source>
</evidence>
<keyword id="KW-0004">4Fe-4S</keyword>
<keyword id="KW-0342">GTP-binding</keyword>
<keyword id="KW-0408">Iron</keyword>
<keyword id="KW-0411">Iron-sulfur</keyword>
<keyword id="KW-0456">Lyase</keyword>
<keyword id="KW-0479">Metal-binding</keyword>
<keyword id="KW-0501">Molybdenum cofactor biosynthesis</keyword>
<keyword id="KW-0547">Nucleotide-binding</keyword>
<keyword id="KW-1185">Reference proteome</keyword>
<keyword id="KW-0949">S-adenosyl-L-methionine</keyword>
<sequence>MNPVDYLRISLIDRCNFRCHYCVPDEASLQYLLTSEQLSNGEILTLLEQVFIPLGFRKFRLTGGEPLLRPQLVPLVRAIAHLPGVEDLSMTTNAYLLADLAQDLYNAGLNRLNISLDSLNPETFDQIIGNRGKSRWQQTWEGIQAAHRVGFDPLKLNVVVIPGVNDQEVLDLAALTGDRHWHVRFIEFMPIGNDKLFNERAWIPSEELRQRIRAKWGLETAFVQGNGPADIFKIPGAKGTLGFISQMSECFCDRCNRMRLSADGWLRPCLLNEAAQMDLKTLLRTGVPPREIRAAVKALLDQKPEINFKMRDMGTTTGQYGRTMSQIGG</sequence>
<dbReference type="EC" id="4.1.99.22" evidence="1"/>
<dbReference type="EMBL" id="CP000951">
    <property type="protein sequence ID" value="ACA99357.1"/>
    <property type="molecule type" value="Genomic_DNA"/>
</dbReference>
<dbReference type="RefSeq" id="WP_012306980.1">
    <property type="nucleotide sequence ID" value="NZ_JAHHPU010000001.1"/>
</dbReference>
<dbReference type="SMR" id="B1XLR4"/>
<dbReference type="STRING" id="32049.SYNPCC7002_A1361"/>
<dbReference type="KEGG" id="syp:SYNPCC7002_A1361"/>
<dbReference type="eggNOG" id="COG2896">
    <property type="taxonomic scope" value="Bacteria"/>
</dbReference>
<dbReference type="HOGENOM" id="CLU_009273_0_1_3"/>
<dbReference type="UniPathway" id="UPA00344"/>
<dbReference type="Proteomes" id="UP000001688">
    <property type="component" value="Chromosome"/>
</dbReference>
<dbReference type="GO" id="GO:0051539">
    <property type="term" value="F:4 iron, 4 sulfur cluster binding"/>
    <property type="evidence" value="ECO:0007669"/>
    <property type="project" value="UniProtKB-UniRule"/>
</dbReference>
<dbReference type="GO" id="GO:0061799">
    <property type="term" value="F:cyclic pyranopterin monophosphate synthase activity"/>
    <property type="evidence" value="ECO:0007669"/>
    <property type="project" value="TreeGrafter"/>
</dbReference>
<dbReference type="GO" id="GO:0061798">
    <property type="term" value="F:GTP 3',8'-cyclase activity"/>
    <property type="evidence" value="ECO:0007669"/>
    <property type="project" value="UniProtKB-UniRule"/>
</dbReference>
<dbReference type="GO" id="GO:0005525">
    <property type="term" value="F:GTP binding"/>
    <property type="evidence" value="ECO:0007669"/>
    <property type="project" value="UniProtKB-UniRule"/>
</dbReference>
<dbReference type="GO" id="GO:0046872">
    <property type="term" value="F:metal ion binding"/>
    <property type="evidence" value="ECO:0007669"/>
    <property type="project" value="UniProtKB-KW"/>
</dbReference>
<dbReference type="GO" id="GO:1904047">
    <property type="term" value="F:S-adenosyl-L-methionine binding"/>
    <property type="evidence" value="ECO:0007669"/>
    <property type="project" value="UniProtKB-UniRule"/>
</dbReference>
<dbReference type="GO" id="GO:0006777">
    <property type="term" value="P:Mo-molybdopterin cofactor biosynthetic process"/>
    <property type="evidence" value="ECO:0007669"/>
    <property type="project" value="UniProtKB-UniRule"/>
</dbReference>
<dbReference type="CDD" id="cd01335">
    <property type="entry name" value="Radical_SAM"/>
    <property type="match status" value="1"/>
</dbReference>
<dbReference type="CDD" id="cd21117">
    <property type="entry name" value="Twitch_MoaA"/>
    <property type="match status" value="1"/>
</dbReference>
<dbReference type="Gene3D" id="3.20.20.70">
    <property type="entry name" value="Aldolase class I"/>
    <property type="match status" value="1"/>
</dbReference>
<dbReference type="HAMAP" id="MF_01225_B">
    <property type="entry name" value="MoaA_B"/>
    <property type="match status" value="1"/>
</dbReference>
<dbReference type="InterPro" id="IPR013785">
    <property type="entry name" value="Aldolase_TIM"/>
</dbReference>
<dbReference type="InterPro" id="IPR006638">
    <property type="entry name" value="Elp3/MiaA/NifB-like_rSAM"/>
</dbReference>
<dbReference type="InterPro" id="IPR013483">
    <property type="entry name" value="MoaA"/>
</dbReference>
<dbReference type="InterPro" id="IPR000385">
    <property type="entry name" value="MoaA_NifB_PqqE_Fe-S-bd_CS"/>
</dbReference>
<dbReference type="InterPro" id="IPR010505">
    <property type="entry name" value="MoaA_twitch"/>
</dbReference>
<dbReference type="InterPro" id="IPR050105">
    <property type="entry name" value="MoCo_biosynth_MoaA/MoaC"/>
</dbReference>
<dbReference type="InterPro" id="IPR007197">
    <property type="entry name" value="rSAM"/>
</dbReference>
<dbReference type="NCBIfam" id="TIGR02666">
    <property type="entry name" value="moaA"/>
    <property type="match status" value="1"/>
</dbReference>
<dbReference type="PANTHER" id="PTHR22960:SF0">
    <property type="entry name" value="MOLYBDENUM COFACTOR BIOSYNTHESIS PROTEIN 1"/>
    <property type="match status" value="1"/>
</dbReference>
<dbReference type="PANTHER" id="PTHR22960">
    <property type="entry name" value="MOLYBDOPTERIN COFACTOR SYNTHESIS PROTEIN A"/>
    <property type="match status" value="1"/>
</dbReference>
<dbReference type="Pfam" id="PF06463">
    <property type="entry name" value="Mob_synth_C"/>
    <property type="match status" value="1"/>
</dbReference>
<dbReference type="Pfam" id="PF04055">
    <property type="entry name" value="Radical_SAM"/>
    <property type="match status" value="1"/>
</dbReference>
<dbReference type="SFLD" id="SFLDG01383">
    <property type="entry name" value="cyclic_pyranopterin_phosphate"/>
    <property type="match status" value="1"/>
</dbReference>
<dbReference type="SFLD" id="SFLDG01386">
    <property type="entry name" value="main_SPASM_domain-containing"/>
    <property type="match status" value="1"/>
</dbReference>
<dbReference type="SMART" id="SM00729">
    <property type="entry name" value="Elp3"/>
    <property type="match status" value="1"/>
</dbReference>
<dbReference type="SUPFAM" id="SSF102114">
    <property type="entry name" value="Radical SAM enzymes"/>
    <property type="match status" value="1"/>
</dbReference>
<dbReference type="PROSITE" id="PS01305">
    <property type="entry name" value="MOAA_NIFB_PQQE"/>
    <property type="match status" value="1"/>
</dbReference>
<dbReference type="PROSITE" id="PS51918">
    <property type="entry name" value="RADICAL_SAM"/>
    <property type="match status" value="1"/>
</dbReference>
<feature type="chain" id="PRO_1000139350" description="GTP 3',8-cyclase">
    <location>
        <begin position="1"/>
        <end position="329"/>
    </location>
</feature>
<feature type="domain" description="Radical SAM core" evidence="2">
    <location>
        <begin position="1"/>
        <end position="229"/>
    </location>
</feature>
<feature type="binding site" evidence="1">
    <location>
        <position position="8"/>
    </location>
    <ligand>
        <name>GTP</name>
        <dbReference type="ChEBI" id="CHEBI:37565"/>
    </ligand>
</feature>
<feature type="binding site" evidence="1">
    <location>
        <position position="15"/>
    </location>
    <ligand>
        <name>[4Fe-4S] cluster</name>
        <dbReference type="ChEBI" id="CHEBI:49883"/>
        <label>1</label>
        <note>4Fe-4S-S-AdoMet</note>
    </ligand>
</feature>
<feature type="binding site" evidence="1">
    <location>
        <position position="19"/>
    </location>
    <ligand>
        <name>[4Fe-4S] cluster</name>
        <dbReference type="ChEBI" id="CHEBI:49883"/>
        <label>1</label>
        <note>4Fe-4S-S-AdoMet</note>
    </ligand>
</feature>
<feature type="binding site" evidence="1">
    <location>
        <position position="21"/>
    </location>
    <ligand>
        <name>S-adenosyl-L-methionine</name>
        <dbReference type="ChEBI" id="CHEBI:59789"/>
    </ligand>
</feature>
<feature type="binding site" evidence="1">
    <location>
        <position position="22"/>
    </location>
    <ligand>
        <name>[4Fe-4S] cluster</name>
        <dbReference type="ChEBI" id="CHEBI:49883"/>
        <label>1</label>
        <note>4Fe-4S-S-AdoMet</note>
    </ligand>
</feature>
<feature type="binding site" evidence="1">
    <location>
        <position position="60"/>
    </location>
    <ligand>
        <name>GTP</name>
        <dbReference type="ChEBI" id="CHEBI:37565"/>
    </ligand>
</feature>
<feature type="binding site" evidence="1">
    <location>
        <position position="64"/>
    </location>
    <ligand>
        <name>S-adenosyl-L-methionine</name>
        <dbReference type="ChEBI" id="CHEBI:59789"/>
    </ligand>
</feature>
<feature type="binding site" evidence="1">
    <location>
        <position position="91"/>
    </location>
    <ligand>
        <name>GTP</name>
        <dbReference type="ChEBI" id="CHEBI:37565"/>
    </ligand>
</feature>
<feature type="binding site" evidence="1">
    <location>
        <position position="115"/>
    </location>
    <ligand>
        <name>S-adenosyl-L-methionine</name>
        <dbReference type="ChEBI" id="CHEBI:59789"/>
    </ligand>
</feature>
<feature type="binding site" evidence="1">
    <location>
        <position position="155"/>
    </location>
    <ligand>
        <name>GTP</name>
        <dbReference type="ChEBI" id="CHEBI:37565"/>
    </ligand>
</feature>
<feature type="binding site" evidence="1">
    <location>
        <position position="189"/>
    </location>
    <ligand>
        <name>S-adenosyl-L-methionine</name>
        <dbReference type="ChEBI" id="CHEBI:59789"/>
    </ligand>
</feature>
<feature type="binding site" evidence="1">
    <location>
        <position position="252"/>
    </location>
    <ligand>
        <name>[4Fe-4S] cluster</name>
        <dbReference type="ChEBI" id="CHEBI:49883"/>
        <label>2</label>
        <note>4Fe-4S-substrate</note>
    </ligand>
</feature>
<feature type="binding site" evidence="1">
    <location>
        <position position="255"/>
    </location>
    <ligand>
        <name>[4Fe-4S] cluster</name>
        <dbReference type="ChEBI" id="CHEBI:49883"/>
        <label>2</label>
        <note>4Fe-4S-substrate</note>
    </ligand>
</feature>
<feature type="binding site" evidence="1">
    <location>
        <begin position="257"/>
        <end position="259"/>
    </location>
    <ligand>
        <name>GTP</name>
        <dbReference type="ChEBI" id="CHEBI:37565"/>
    </ligand>
</feature>
<feature type="binding site" evidence="1">
    <location>
        <position position="269"/>
    </location>
    <ligand>
        <name>[4Fe-4S] cluster</name>
        <dbReference type="ChEBI" id="CHEBI:49883"/>
        <label>2</label>
        <note>4Fe-4S-substrate</note>
    </ligand>
</feature>
<reference key="1">
    <citation type="submission" date="2008-02" db="EMBL/GenBank/DDBJ databases">
        <title>Complete sequence of Synechococcus sp. PCC 7002.</title>
        <authorList>
            <person name="Li T."/>
            <person name="Zhao J."/>
            <person name="Zhao C."/>
            <person name="Liu Z."/>
            <person name="Zhao F."/>
            <person name="Marquardt J."/>
            <person name="Nomura C.T."/>
            <person name="Persson S."/>
            <person name="Detter J.C."/>
            <person name="Richardson P.M."/>
            <person name="Lanz C."/>
            <person name="Schuster S.C."/>
            <person name="Wang J."/>
            <person name="Li S."/>
            <person name="Huang X."/>
            <person name="Cai T."/>
            <person name="Yu Z."/>
            <person name="Luo J."/>
            <person name="Zhao J."/>
            <person name="Bryant D.A."/>
        </authorList>
    </citation>
    <scope>NUCLEOTIDE SEQUENCE [LARGE SCALE GENOMIC DNA]</scope>
    <source>
        <strain>ATCC 27264 / PCC 7002 / PR-6</strain>
    </source>
</reference>
<protein>
    <recommendedName>
        <fullName evidence="1">GTP 3',8-cyclase</fullName>
        <ecNumber evidence="1">4.1.99.22</ecNumber>
    </recommendedName>
    <alternativeName>
        <fullName evidence="1">Molybdenum cofactor biosynthesis protein A</fullName>
    </alternativeName>
</protein>
<gene>
    <name evidence="1" type="primary">moaA</name>
    <name type="ordered locus">SYNPCC7002_A1361</name>
</gene>
<accession>B1XLR4</accession>
<comment type="function">
    <text evidence="1">Catalyzes the cyclization of GTP to (8S)-3',8-cyclo-7,8-dihydroguanosine 5'-triphosphate.</text>
</comment>
<comment type="catalytic activity">
    <reaction evidence="1">
        <text>GTP + AH2 + S-adenosyl-L-methionine = (8S)-3',8-cyclo-7,8-dihydroguanosine 5'-triphosphate + 5'-deoxyadenosine + L-methionine + A + H(+)</text>
        <dbReference type="Rhea" id="RHEA:49576"/>
        <dbReference type="ChEBI" id="CHEBI:13193"/>
        <dbReference type="ChEBI" id="CHEBI:15378"/>
        <dbReference type="ChEBI" id="CHEBI:17319"/>
        <dbReference type="ChEBI" id="CHEBI:17499"/>
        <dbReference type="ChEBI" id="CHEBI:37565"/>
        <dbReference type="ChEBI" id="CHEBI:57844"/>
        <dbReference type="ChEBI" id="CHEBI:59789"/>
        <dbReference type="ChEBI" id="CHEBI:131766"/>
        <dbReference type="EC" id="4.1.99.22"/>
    </reaction>
</comment>
<comment type="cofactor">
    <cofactor evidence="1">
        <name>[4Fe-4S] cluster</name>
        <dbReference type="ChEBI" id="CHEBI:49883"/>
    </cofactor>
    <text evidence="1">Binds 2 [4Fe-4S] clusters. Binds 1 [4Fe-4S] cluster coordinated with 3 cysteines and an exchangeable S-adenosyl-L-methionine and 1 [4Fe-4S] cluster coordinated with 3 cysteines and the GTP-derived substrate.</text>
</comment>
<comment type="pathway">
    <text evidence="1">Cofactor biosynthesis; molybdopterin biosynthesis.</text>
</comment>
<comment type="subunit">
    <text evidence="1">Monomer and homodimer.</text>
</comment>
<comment type="similarity">
    <text evidence="1">Belongs to the radical SAM superfamily. MoaA family.</text>
</comment>
<proteinExistence type="inferred from homology"/>
<organism>
    <name type="scientific">Picosynechococcus sp. (strain ATCC 27264 / PCC 7002 / PR-6)</name>
    <name type="common">Agmenellum quadruplicatum</name>
    <dbReference type="NCBI Taxonomy" id="32049"/>
    <lineage>
        <taxon>Bacteria</taxon>
        <taxon>Bacillati</taxon>
        <taxon>Cyanobacteriota</taxon>
        <taxon>Cyanophyceae</taxon>
        <taxon>Oscillatoriophycideae</taxon>
        <taxon>Chroococcales</taxon>
        <taxon>Geminocystaceae</taxon>
        <taxon>Picosynechococcus</taxon>
    </lineage>
</organism>